<gene>
    <name type="ordered locus">Ta0931</name>
</gene>
<name>TRM56_THEAC</name>
<feature type="chain" id="PRO_0000365326" description="tRNA (cytidine(56)-2'-O)-methyltransferase">
    <location>
        <begin position="1"/>
        <end position="339"/>
    </location>
</feature>
<feature type="domain" description="HD" evidence="2">
    <location>
        <begin position="188"/>
        <end position="295"/>
    </location>
</feature>
<feature type="binding site" evidence="1">
    <location>
        <position position="79"/>
    </location>
    <ligand>
        <name>S-adenosyl-L-methionine</name>
        <dbReference type="ChEBI" id="CHEBI:59789"/>
    </ligand>
</feature>
<feature type="binding site" evidence="1">
    <location>
        <begin position="105"/>
        <end position="109"/>
    </location>
    <ligand>
        <name>S-adenosyl-L-methionine</name>
        <dbReference type="ChEBI" id="CHEBI:59789"/>
    </ligand>
</feature>
<feature type="strand" evidence="4">
    <location>
        <begin position="2"/>
        <end position="6"/>
    </location>
</feature>
<feature type="turn" evidence="4">
    <location>
        <begin position="11"/>
        <end position="13"/>
    </location>
</feature>
<feature type="helix" evidence="4">
    <location>
        <begin position="16"/>
        <end position="27"/>
    </location>
</feature>
<feature type="strand" evidence="4">
    <location>
        <begin position="31"/>
        <end position="37"/>
    </location>
</feature>
<feature type="helix" evidence="4">
    <location>
        <begin position="40"/>
        <end position="53"/>
    </location>
</feature>
<feature type="strand" evidence="4">
    <location>
        <begin position="58"/>
        <end position="62"/>
    </location>
</feature>
<feature type="helix" evidence="4">
    <location>
        <begin position="65"/>
        <end position="70"/>
    </location>
</feature>
<feature type="strand" evidence="4">
    <location>
        <begin position="73"/>
        <end position="79"/>
    </location>
</feature>
<feature type="strand" evidence="4">
    <location>
        <begin position="83"/>
        <end position="85"/>
    </location>
</feature>
<feature type="helix" evidence="4">
    <location>
        <begin position="86"/>
        <end position="95"/>
    </location>
</feature>
<feature type="strand" evidence="4">
    <location>
        <begin position="100"/>
        <end position="104"/>
    </location>
</feature>
<feature type="helix" evidence="4">
    <location>
        <begin position="111"/>
        <end position="116"/>
    </location>
</feature>
<feature type="strand" evidence="4">
    <location>
        <begin position="118"/>
        <end position="123"/>
    </location>
</feature>
<feature type="helix" evidence="4">
    <location>
        <begin position="130"/>
        <end position="141"/>
    </location>
</feature>
<feature type="turn" evidence="4">
    <location>
        <begin position="142"/>
        <end position="144"/>
    </location>
</feature>
<feature type="helix" evidence="4">
    <location>
        <begin position="146"/>
        <end position="148"/>
    </location>
</feature>
<dbReference type="EC" id="2.1.1.206"/>
<dbReference type="EMBL" id="AL445066">
    <property type="protein sequence ID" value="CAC12060.1"/>
    <property type="molecule type" value="Genomic_DNA"/>
</dbReference>
<dbReference type="RefSeq" id="WP_010901340.1">
    <property type="nucleotide sequence ID" value="NC_002578.1"/>
</dbReference>
<dbReference type="PDB" id="8X6K">
    <property type="method" value="X-ray"/>
    <property type="resolution" value="1.80 A"/>
    <property type="chains" value="A/B=1-151"/>
</dbReference>
<dbReference type="PDB" id="9U46">
    <property type="method" value="X-ray"/>
    <property type="resolution" value="1.99 A"/>
    <property type="chains" value="A=1-151"/>
</dbReference>
<dbReference type="PDBsum" id="8X6K"/>
<dbReference type="PDBsum" id="9U46"/>
<dbReference type="SMR" id="Q9HJN6"/>
<dbReference type="STRING" id="273075.gene:9572148"/>
<dbReference type="PaxDb" id="273075-Ta0931"/>
<dbReference type="EnsemblBacteria" id="CAC12060">
    <property type="protein sequence ID" value="CAC12060"/>
    <property type="gene ID" value="CAC12060"/>
</dbReference>
<dbReference type="KEGG" id="tac:Ta0931"/>
<dbReference type="eggNOG" id="arCOG01857">
    <property type="taxonomic scope" value="Archaea"/>
</dbReference>
<dbReference type="HOGENOM" id="CLU_817897_0_0_2"/>
<dbReference type="InParanoid" id="Q9HJN6"/>
<dbReference type="OrthoDB" id="14397at2157"/>
<dbReference type="BRENDA" id="2.1.1.206">
    <property type="organism ID" value="6324"/>
</dbReference>
<dbReference type="Proteomes" id="UP000001024">
    <property type="component" value="Chromosome"/>
</dbReference>
<dbReference type="GO" id="GO:0005737">
    <property type="term" value="C:cytoplasm"/>
    <property type="evidence" value="ECO:0007669"/>
    <property type="project" value="UniProtKB-SubCell"/>
</dbReference>
<dbReference type="GO" id="GO:0106059">
    <property type="term" value="F:tRNA (cytidine(56)-2'-O)-methyltransferase activity"/>
    <property type="evidence" value="ECO:0007669"/>
    <property type="project" value="UniProtKB-EC"/>
</dbReference>
<dbReference type="GO" id="GO:0002128">
    <property type="term" value="P:tRNA nucleoside ribose methylation"/>
    <property type="evidence" value="ECO:0007669"/>
    <property type="project" value="UniProtKB-UniRule"/>
</dbReference>
<dbReference type="CDD" id="cd18083">
    <property type="entry name" value="aTrm56-like"/>
    <property type="match status" value="1"/>
</dbReference>
<dbReference type="CDD" id="cd00077">
    <property type="entry name" value="HDc"/>
    <property type="match status" value="1"/>
</dbReference>
<dbReference type="Gene3D" id="3.40.1280.10">
    <property type="match status" value="1"/>
</dbReference>
<dbReference type="Gene3D" id="1.10.3210.10">
    <property type="entry name" value="Hypothetical protein af1432"/>
    <property type="match status" value="1"/>
</dbReference>
<dbReference type="HAMAP" id="MF_00077">
    <property type="entry name" value="tRNA_methyltr_aTrm56"/>
    <property type="match status" value="1"/>
</dbReference>
<dbReference type="InterPro" id="IPR029028">
    <property type="entry name" value="Alpha/beta_knot_MTases"/>
</dbReference>
<dbReference type="InterPro" id="IPR003607">
    <property type="entry name" value="HD/PDEase_dom"/>
</dbReference>
<dbReference type="InterPro" id="IPR006674">
    <property type="entry name" value="HD_domain"/>
</dbReference>
<dbReference type="InterPro" id="IPR006675">
    <property type="entry name" value="HDIG_dom"/>
</dbReference>
<dbReference type="InterPro" id="IPR029026">
    <property type="entry name" value="tRNA_m1G_MTases_N"/>
</dbReference>
<dbReference type="InterPro" id="IPR002845">
    <property type="entry name" value="tRNA_mtfrase_aTrm56"/>
</dbReference>
<dbReference type="NCBIfam" id="TIGR00277">
    <property type="entry name" value="HDIG"/>
    <property type="match status" value="1"/>
</dbReference>
<dbReference type="NCBIfam" id="NF009343">
    <property type="entry name" value="PRK12703.1"/>
    <property type="match status" value="1"/>
</dbReference>
<dbReference type="PANTHER" id="PTHR42197">
    <property type="entry name" value="TRNA (CYTIDINE(56)-2'-O)-METHYLTRANSFERASE"/>
    <property type="match status" value="1"/>
</dbReference>
<dbReference type="PANTHER" id="PTHR42197:SF1">
    <property type="entry name" value="TRNA (CYTIDINE(56)-2'-O)-METHYLTRANSFERASE"/>
    <property type="match status" value="1"/>
</dbReference>
<dbReference type="Pfam" id="PF01966">
    <property type="entry name" value="HD"/>
    <property type="match status" value="1"/>
</dbReference>
<dbReference type="Pfam" id="PF01994">
    <property type="entry name" value="Trm56"/>
    <property type="match status" value="1"/>
</dbReference>
<dbReference type="SMART" id="SM00471">
    <property type="entry name" value="HDc"/>
    <property type="match status" value="1"/>
</dbReference>
<dbReference type="SUPFAM" id="SSF75217">
    <property type="entry name" value="alpha/beta knot"/>
    <property type="match status" value="1"/>
</dbReference>
<dbReference type="SUPFAM" id="SSF109604">
    <property type="entry name" value="HD-domain/PDEase-like"/>
    <property type="match status" value="1"/>
</dbReference>
<dbReference type="PROSITE" id="PS51831">
    <property type="entry name" value="HD"/>
    <property type="match status" value="1"/>
</dbReference>
<reference key="1">
    <citation type="journal article" date="2000" name="Nature">
        <title>The genome sequence of the thermoacidophilic scavenger Thermoplasma acidophilum.</title>
        <authorList>
            <person name="Ruepp A."/>
            <person name="Graml W."/>
            <person name="Santos-Martinez M.-L."/>
            <person name="Koretke K.K."/>
            <person name="Volker C."/>
            <person name="Mewes H.-W."/>
            <person name="Frishman D."/>
            <person name="Stocker S."/>
            <person name="Lupas A.N."/>
            <person name="Baumeister W."/>
        </authorList>
    </citation>
    <scope>NUCLEOTIDE SEQUENCE [LARGE SCALE GENOMIC DNA]</scope>
    <source>
        <strain>ATCC 25905 / DSM 1728 / JCM 9062 / NBRC 15155 / AMRC-C165</strain>
    </source>
</reference>
<evidence type="ECO:0000250" key="1"/>
<evidence type="ECO:0000255" key="2">
    <source>
        <dbReference type="PROSITE-ProRule" id="PRU01175"/>
    </source>
</evidence>
<evidence type="ECO:0000305" key="3"/>
<evidence type="ECO:0007829" key="4">
    <source>
        <dbReference type="PDB" id="8X6K"/>
    </source>
</evidence>
<accession>Q9HJN6</accession>
<organism>
    <name type="scientific">Thermoplasma acidophilum (strain ATCC 25905 / DSM 1728 / JCM 9062 / NBRC 15155 / AMRC-C165)</name>
    <dbReference type="NCBI Taxonomy" id="273075"/>
    <lineage>
        <taxon>Archaea</taxon>
        <taxon>Methanobacteriati</taxon>
        <taxon>Thermoplasmatota</taxon>
        <taxon>Thermoplasmata</taxon>
        <taxon>Thermoplasmatales</taxon>
        <taxon>Thermoplasmataceae</taxon>
        <taxon>Thermoplasma</taxon>
    </lineage>
</organism>
<sequence length="339" mass="38120">MITVLRINHRPYRDKRITTHVALTARAFGASAILVDERDETLENTIRGVISNFGGSFSIKTGCNWIQEFKHFQGIRVHLTMYGRRINDVIDEIRNSGKDVMVLVGSEKVPIEAYEIADYNVSVTNQPISEVSALAIFLDRYFQGKEFEFEFRGRINVQPAERGKIVKIIPDEIECLDLLKKYGASEQLIEHVKAVEGLALKIAERCNADKRVIVAGSLLHDIGRTRTNGIDHAVAGAEILRSENIHDSVVSAVERHIGAGITREEAARLGLPEKDYVPETLEEMIVAQADNLFAGNKRLRLEEVLNIYRKRGLDSAAERIKELHRRISAIAGIDIDEIR</sequence>
<proteinExistence type="evidence at protein level"/>
<comment type="function">
    <text evidence="1">Specifically catalyzes the AdoMet-dependent 2'-O-ribose methylation of cytidine at position 56 in tRNAs.</text>
</comment>
<comment type="catalytic activity">
    <reaction>
        <text>cytidine(56) in tRNA + S-adenosyl-L-methionine = 2'-O-methylcytidine(56) in tRNA + S-adenosyl-L-homocysteine + H(+)</text>
        <dbReference type="Rhea" id="RHEA:42968"/>
        <dbReference type="Rhea" id="RHEA-COMP:10308"/>
        <dbReference type="Rhea" id="RHEA-COMP:10309"/>
        <dbReference type="ChEBI" id="CHEBI:15378"/>
        <dbReference type="ChEBI" id="CHEBI:57856"/>
        <dbReference type="ChEBI" id="CHEBI:59789"/>
        <dbReference type="ChEBI" id="CHEBI:74495"/>
        <dbReference type="ChEBI" id="CHEBI:82748"/>
        <dbReference type="EC" id="2.1.1.206"/>
    </reaction>
</comment>
<comment type="subunit">
    <text evidence="1">Homodimer.</text>
</comment>
<comment type="subcellular location">
    <subcellularLocation>
        <location evidence="3">Cytoplasm</location>
    </subcellularLocation>
</comment>
<comment type="similarity">
    <text evidence="3">Belongs to the aTrm56 family.</text>
</comment>
<protein>
    <recommendedName>
        <fullName>tRNA (cytidine(56)-2'-O)-methyltransferase</fullName>
        <ecNumber>2.1.1.206</ecNumber>
    </recommendedName>
    <alternativeName>
        <fullName>tRNA ribose 2'-O-methyltransferase aTrm56</fullName>
    </alternativeName>
</protein>
<keyword id="KW-0002">3D-structure</keyword>
<keyword id="KW-0963">Cytoplasm</keyword>
<keyword id="KW-0489">Methyltransferase</keyword>
<keyword id="KW-1185">Reference proteome</keyword>
<keyword id="KW-0949">S-adenosyl-L-methionine</keyword>
<keyword id="KW-0808">Transferase</keyword>
<keyword id="KW-0819">tRNA processing</keyword>